<keyword id="KW-0066">ATP synthesis</keyword>
<keyword id="KW-0997">Cell inner membrane</keyword>
<keyword id="KW-1003">Cell membrane</keyword>
<keyword id="KW-0139">CF(1)</keyword>
<keyword id="KW-0375">Hydrogen ion transport</keyword>
<keyword id="KW-0406">Ion transport</keyword>
<keyword id="KW-0472">Membrane</keyword>
<keyword id="KW-0813">Transport</keyword>
<comment type="function">
    <text evidence="1">F(1)F(0) ATP synthase produces ATP from ADP in the presence of a proton or sodium gradient. F-type ATPases consist of two structural domains, F(1) containing the extramembraneous catalytic core and F(0) containing the membrane proton channel, linked together by a central stalk and a peripheral stalk. During catalysis, ATP synthesis in the catalytic domain of F(1) is coupled via a rotary mechanism of the central stalk subunits to proton translocation.</text>
</comment>
<comment type="function">
    <text evidence="1">This protein is part of the stalk that links CF(0) to CF(1). It either transmits conformational changes from CF(0) to CF(1) or is implicated in proton conduction.</text>
</comment>
<comment type="subunit">
    <text evidence="1">F-type ATPases have 2 components, F(1) - the catalytic core - and F(0) - the membrane proton channel. F(1) has five subunits: alpha(3), beta(3), gamma(1), delta(1), epsilon(1). F(0) has three main subunits: a(1), b(2) and c(10-14). The alpha and beta chains form an alternating ring which encloses part of the gamma chain. F(1) is attached to F(0) by a central stalk formed by the gamma and epsilon chains, while a peripheral stalk is formed by the delta and b chains.</text>
</comment>
<comment type="subcellular location">
    <subcellularLocation>
        <location evidence="1">Cell inner membrane</location>
        <topology evidence="1">Peripheral membrane protein</topology>
    </subcellularLocation>
</comment>
<comment type="similarity">
    <text evidence="1">Belongs to the ATPase delta chain family.</text>
</comment>
<reference key="1">
    <citation type="journal article" date="2006" name="PLoS Genet.">
        <title>Comparative genomics of emerging human ehrlichiosis agents.</title>
        <authorList>
            <person name="Dunning Hotopp J.C."/>
            <person name="Lin M."/>
            <person name="Madupu R."/>
            <person name="Crabtree J."/>
            <person name="Angiuoli S.V."/>
            <person name="Eisen J.A."/>
            <person name="Seshadri R."/>
            <person name="Ren Q."/>
            <person name="Wu M."/>
            <person name="Utterback T.R."/>
            <person name="Smith S."/>
            <person name="Lewis M."/>
            <person name="Khouri H."/>
            <person name="Zhang C."/>
            <person name="Niu H."/>
            <person name="Lin Q."/>
            <person name="Ohashi N."/>
            <person name="Zhi N."/>
            <person name="Nelson W.C."/>
            <person name="Brinkac L.M."/>
            <person name="Dodson R.J."/>
            <person name="Rosovitz M.J."/>
            <person name="Sundaram J.P."/>
            <person name="Daugherty S.C."/>
            <person name="Davidsen T."/>
            <person name="Durkin A.S."/>
            <person name="Gwinn M.L."/>
            <person name="Haft D.H."/>
            <person name="Selengut J.D."/>
            <person name="Sullivan S.A."/>
            <person name="Zafar N."/>
            <person name="Zhou L."/>
            <person name="Benahmed F."/>
            <person name="Forberger H."/>
            <person name="Halpin R."/>
            <person name="Mulligan S."/>
            <person name="Robinson J."/>
            <person name="White O."/>
            <person name="Rikihisa Y."/>
            <person name="Tettelin H."/>
        </authorList>
    </citation>
    <scope>NUCLEOTIDE SEQUENCE [LARGE SCALE GENOMIC DNA]</scope>
    <source>
        <strain>ATCC VR-367 / Miyayama</strain>
    </source>
</reference>
<protein>
    <recommendedName>
        <fullName evidence="1">ATP synthase subunit delta</fullName>
    </recommendedName>
    <alternativeName>
        <fullName evidence="1">ATP synthase F(1) sector subunit delta</fullName>
    </alternativeName>
    <alternativeName>
        <fullName evidence="1">F-type ATPase subunit delta</fullName>
        <shortName evidence="1">F-ATPase subunit delta</shortName>
    </alternativeName>
</protein>
<proteinExistence type="inferred from homology"/>
<sequence length="174" mass="19443">MQQYIAGRYAQSLYAVCGPRLESDANKFLGLLSENNFLSFAKVKTSTKLHVLDRLHLPCELKNLCKLLLANHRGFLCTTVLLGYIEIVKKNRKEADARVESYSRLSATAKKEVADALLIKFPYLKKINIAQKVNRSILGGLTIKINSIMIDLSIAGRLAKCKSIGQSTILEIFQ</sequence>
<feature type="chain" id="PRO_0000382128" description="ATP synthase subunit delta">
    <location>
        <begin position="1"/>
        <end position="174"/>
    </location>
</feature>
<dbReference type="EMBL" id="CP000237">
    <property type="protein sequence ID" value="ABD45845.1"/>
    <property type="molecule type" value="Genomic_DNA"/>
</dbReference>
<dbReference type="RefSeq" id="WP_011451538.1">
    <property type="nucleotide sequence ID" value="NC_007798.1"/>
</dbReference>
<dbReference type="SMR" id="Q2GER4"/>
<dbReference type="STRING" id="222891.NSE_0132"/>
<dbReference type="KEGG" id="nse:NSE_0132"/>
<dbReference type="eggNOG" id="COG0712">
    <property type="taxonomic scope" value="Bacteria"/>
</dbReference>
<dbReference type="HOGENOM" id="CLU_1546009_0_0_5"/>
<dbReference type="OrthoDB" id="9796185at2"/>
<dbReference type="Proteomes" id="UP000001942">
    <property type="component" value="Chromosome"/>
</dbReference>
<dbReference type="GO" id="GO:0005886">
    <property type="term" value="C:plasma membrane"/>
    <property type="evidence" value="ECO:0007669"/>
    <property type="project" value="UniProtKB-SubCell"/>
</dbReference>
<dbReference type="GO" id="GO:0045259">
    <property type="term" value="C:proton-transporting ATP synthase complex"/>
    <property type="evidence" value="ECO:0007669"/>
    <property type="project" value="UniProtKB-KW"/>
</dbReference>
<dbReference type="GO" id="GO:0046933">
    <property type="term" value="F:proton-transporting ATP synthase activity, rotational mechanism"/>
    <property type="evidence" value="ECO:0007669"/>
    <property type="project" value="UniProtKB-UniRule"/>
</dbReference>
<dbReference type="HAMAP" id="MF_01416">
    <property type="entry name" value="ATP_synth_delta_bact"/>
    <property type="match status" value="1"/>
</dbReference>
<dbReference type="InterPro" id="IPR020781">
    <property type="entry name" value="ATPase_OSCP/d_CS"/>
</dbReference>
<dbReference type="InterPro" id="IPR000711">
    <property type="entry name" value="ATPase_OSCP/dsu"/>
</dbReference>
<dbReference type="NCBIfam" id="TIGR01145">
    <property type="entry name" value="ATP_synt_delta"/>
    <property type="match status" value="1"/>
</dbReference>
<dbReference type="PANTHER" id="PTHR11910">
    <property type="entry name" value="ATP SYNTHASE DELTA CHAIN"/>
    <property type="match status" value="1"/>
</dbReference>
<dbReference type="Pfam" id="PF00213">
    <property type="entry name" value="OSCP"/>
    <property type="match status" value="1"/>
</dbReference>
<dbReference type="PRINTS" id="PR00125">
    <property type="entry name" value="ATPASEDELTA"/>
</dbReference>
<dbReference type="PROSITE" id="PS00389">
    <property type="entry name" value="ATPASE_DELTA"/>
    <property type="match status" value="1"/>
</dbReference>
<evidence type="ECO:0000255" key="1">
    <source>
        <dbReference type="HAMAP-Rule" id="MF_01416"/>
    </source>
</evidence>
<accession>Q2GER4</accession>
<name>ATPD_NEOSM</name>
<gene>
    <name evidence="1" type="primary">atpH</name>
    <name type="ordered locus">NSE_0132</name>
</gene>
<organism>
    <name type="scientific">Neorickettsia sennetsu (strain ATCC VR-367 / Miyayama)</name>
    <name type="common">Ehrlichia sennetsu</name>
    <dbReference type="NCBI Taxonomy" id="222891"/>
    <lineage>
        <taxon>Bacteria</taxon>
        <taxon>Pseudomonadati</taxon>
        <taxon>Pseudomonadota</taxon>
        <taxon>Alphaproteobacteria</taxon>
        <taxon>Rickettsiales</taxon>
        <taxon>Anaplasmataceae</taxon>
        <taxon>Neorickettsia</taxon>
    </lineage>
</organism>